<organism>
    <name type="scientific">Burkholderia orbicola (strain AU 1054)</name>
    <dbReference type="NCBI Taxonomy" id="331271"/>
    <lineage>
        <taxon>Bacteria</taxon>
        <taxon>Pseudomonadati</taxon>
        <taxon>Pseudomonadota</taxon>
        <taxon>Betaproteobacteria</taxon>
        <taxon>Burkholderiales</taxon>
        <taxon>Burkholderiaceae</taxon>
        <taxon>Burkholderia</taxon>
        <taxon>Burkholderia cepacia complex</taxon>
        <taxon>Burkholderia orbicola</taxon>
    </lineage>
</organism>
<name>KCY_BURO1</name>
<keyword id="KW-0067">ATP-binding</keyword>
<keyword id="KW-0963">Cytoplasm</keyword>
<keyword id="KW-0418">Kinase</keyword>
<keyword id="KW-0547">Nucleotide-binding</keyword>
<keyword id="KW-0808">Transferase</keyword>
<comment type="catalytic activity">
    <reaction evidence="1">
        <text>CMP + ATP = CDP + ADP</text>
        <dbReference type="Rhea" id="RHEA:11600"/>
        <dbReference type="ChEBI" id="CHEBI:30616"/>
        <dbReference type="ChEBI" id="CHEBI:58069"/>
        <dbReference type="ChEBI" id="CHEBI:60377"/>
        <dbReference type="ChEBI" id="CHEBI:456216"/>
        <dbReference type="EC" id="2.7.4.25"/>
    </reaction>
</comment>
<comment type="catalytic activity">
    <reaction evidence="1">
        <text>dCMP + ATP = dCDP + ADP</text>
        <dbReference type="Rhea" id="RHEA:25094"/>
        <dbReference type="ChEBI" id="CHEBI:30616"/>
        <dbReference type="ChEBI" id="CHEBI:57566"/>
        <dbReference type="ChEBI" id="CHEBI:58593"/>
        <dbReference type="ChEBI" id="CHEBI:456216"/>
        <dbReference type="EC" id="2.7.4.25"/>
    </reaction>
</comment>
<comment type="subcellular location">
    <subcellularLocation>
        <location evidence="1">Cytoplasm</location>
    </subcellularLocation>
</comment>
<comment type="similarity">
    <text evidence="1">Belongs to the cytidylate kinase family. Type 1 subfamily.</text>
</comment>
<sequence length="228" mass="24381">MKSTRPFHPTPVITIDGPTASGKGTVAALVAAHLGFHLLDSGALYRLAALASVRYGIAAEDIDALVKLIDDLHITFREGCAQLDGVDVSNDIRAEAVGNRASAIAVHGPVRTALVARQRAFRKTPGLVADGRDMGTVIFPDAVLKVFLTASAEARATRRHKQLMQKGFSANIDDLLRDLRERDARDSNRAAAPLKPAADAKLLDTSALSVDEAVDQVLQWYRALGQPA</sequence>
<accession>Q1BY27</accession>
<proteinExistence type="inferred from homology"/>
<feature type="chain" id="PRO_1000048193" description="Cytidylate kinase">
    <location>
        <begin position="1"/>
        <end position="228"/>
    </location>
</feature>
<feature type="binding site" evidence="1">
    <location>
        <begin position="17"/>
        <end position="25"/>
    </location>
    <ligand>
        <name>ATP</name>
        <dbReference type="ChEBI" id="CHEBI:30616"/>
    </ligand>
</feature>
<evidence type="ECO:0000255" key="1">
    <source>
        <dbReference type="HAMAP-Rule" id="MF_00238"/>
    </source>
</evidence>
<gene>
    <name evidence="1" type="primary">cmk</name>
    <name type="ordered locus">Bcen_0567</name>
</gene>
<dbReference type="EC" id="2.7.4.25" evidence="1"/>
<dbReference type="EMBL" id="CP000378">
    <property type="protein sequence ID" value="ABF75478.1"/>
    <property type="molecule type" value="Genomic_DNA"/>
</dbReference>
<dbReference type="SMR" id="Q1BY27"/>
<dbReference type="HOGENOM" id="CLU_079959_2_0_4"/>
<dbReference type="GO" id="GO:0005829">
    <property type="term" value="C:cytosol"/>
    <property type="evidence" value="ECO:0007669"/>
    <property type="project" value="TreeGrafter"/>
</dbReference>
<dbReference type="GO" id="GO:0005524">
    <property type="term" value="F:ATP binding"/>
    <property type="evidence" value="ECO:0007669"/>
    <property type="project" value="UniProtKB-UniRule"/>
</dbReference>
<dbReference type="GO" id="GO:0036430">
    <property type="term" value="F:CMP kinase activity"/>
    <property type="evidence" value="ECO:0007669"/>
    <property type="project" value="RHEA"/>
</dbReference>
<dbReference type="GO" id="GO:0036431">
    <property type="term" value="F:dCMP kinase activity"/>
    <property type="evidence" value="ECO:0007669"/>
    <property type="project" value="RHEA"/>
</dbReference>
<dbReference type="GO" id="GO:0015949">
    <property type="term" value="P:nucleobase-containing small molecule interconversion"/>
    <property type="evidence" value="ECO:0007669"/>
    <property type="project" value="TreeGrafter"/>
</dbReference>
<dbReference type="GO" id="GO:0006220">
    <property type="term" value="P:pyrimidine nucleotide metabolic process"/>
    <property type="evidence" value="ECO:0007669"/>
    <property type="project" value="UniProtKB-UniRule"/>
</dbReference>
<dbReference type="CDD" id="cd02020">
    <property type="entry name" value="CMPK"/>
    <property type="match status" value="1"/>
</dbReference>
<dbReference type="Gene3D" id="3.40.50.300">
    <property type="entry name" value="P-loop containing nucleotide triphosphate hydrolases"/>
    <property type="match status" value="1"/>
</dbReference>
<dbReference type="HAMAP" id="MF_00238">
    <property type="entry name" value="Cytidyl_kinase_type1"/>
    <property type="match status" value="1"/>
</dbReference>
<dbReference type="InterPro" id="IPR003136">
    <property type="entry name" value="Cytidylate_kin"/>
</dbReference>
<dbReference type="InterPro" id="IPR011994">
    <property type="entry name" value="Cytidylate_kinase_dom"/>
</dbReference>
<dbReference type="InterPro" id="IPR027417">
    <property type="entry name" value="P-loop_NTPase"/>
</dbReference>
<dbReference type="NCBIfam" id="TIGR00017">
    <property type="entry name" value="cmk"/>
    <property type="match status" value="1"/>
</dbReference>
<dbReference type="PANTHER" id="PTHR21299:SF2">
    <property type="entry name" value="CYTIDYLATE KINASE"/>
    <property type="match status" value="1"/>
</dbReference>
<dbReference type="PANTHER" id="PTHR21299">
    <property type="entry name" value="CYTIDYLATE KINASE/PANTOATE-BETA-ALANINE LIGASE"/>
    <property type="match status" value="1"/>
</dbReference>
<dbReference type="Pfam" id="PF02224">
    <property type="entry name" value="Cytidylate_kin"/>
    <property type="match status" value="1"/>
</dbReference>
<dbReference type="SUPFAM" id="SSF52540">
    <property type="entry name" value="P-loop containing nucleoside triphosphate hydrolases"/>
    <property type="match status" value="1"/>
</dbReference>
<reference key="1">
    <citation type="submission" date="2006-05" db="EMBL/GenBank/DDBJ databases">
        <title>Complete sequence of chromosome 1 of Burkholderia cenocepacia AU 1054.</title>
        <authorList>
            <consortium name="US DOE Joint Genome Institute"/>
            <person name="Copeland A."/>
            <person name="Lucas S."/>
            <person name="Lapidus A."/>
            <person name="Barry K."/>
            <person name="Detter J.C."/>
            <person name="Glavina del Rio T."/>
            <person name="Hammon N."/>
            <person name="Israni S."/>
            <person name="Dalin E."/>
            <person name="Tice H."/>
            <person name="Pitluck S."/>
            <person name="Chain P."/>
            <person name="Malfatti S."/>
            <person name="Shin M."/>
            <person name="Vergez L."/>
            <person name="Schmutz J."/>
            <person name="Larimer F."/>
            <person name="Land M."/>
            <person name="Hauser L."/>
            <person name="Kyrpides N."/>
            <person name="Lykidis A."/>
            <person name="LiPuma J.J."/>
            <person name="Konstantinidis K."/>
            <person name="Tiedje J.M."/>
            <person name="Richardson P."/>
        </authorList>
    </citation>
    <scope>NUCLEOTIDE SEQUENCE [LARGE SCALE GENOMIC DNA]</scope>
    <source>
        <strain>AU 1054</strain>
    </source>
</reference>
<protein>
    <recommendedName>
        <fullName evidence="1">Cytidylate kinase</fullName>
        <shortName evidence="1">CK</shortName>
        <ecNumber evidence="1">2.7.4.25</ecNumber>
    </recommendedName>
    <alternativeName>
        <fullName evidence="1">Cytidine monophosphate kinase</fullName>
        <shortName evidence="1">CMP kinase</shortName>
    </alternativeName>
</protein>